<name>NUOB_SALPA</name>
<protein>
    <recommendedName>
        <fullName evidence="1">NADH-quinone oxidoreductase subunit B</fullName>
        <ecNumber evidence="1">7.1.1.-</ecNumber>
    </recommendedName>
    <alternativeName>
        <fullName evidence="1">NADH dehydrogenase I subunit B</fullName>
    </alternativeName>
    <alternativeName>
        <fullName evidence="1">NDH-1 subunit B</fullName>
    </alternativeName>
</protein>
<sequence length="220" mass="25089">MDYTLTRIDPNGENDRYPLQKQEIVTDPLEQEVNKNVFMGKLHDMVNWGRKNSIWPYNFGLSCCYVEMVTSFTAVHDVARFGAEVLRASPRQADLMVVAGTCFTKMAPVIQRLYDQMLEPKWVISMGACANSGGMYDIYSVVQGVDKFIPVDVYIPGCPPRPEAYMQALMLLQESIGKERRPLSWVVGDQGVYRANMQPERERKRGERIAVTNLRTPDEI</sequence>
<accession>Q5PN54</accession>
<dbReference type="EC" id="7.1.1.-" evidence="1"/>
<dbReference type="EMBL" id="CP000026">
    <property type="protein sequence ID" value="AAV76539.1"/>
    <property type="molecule type" value="Genomic_DNA"/>
</dbReference>
<dbReference type="RefSeq" id="WP_000386728.1">
    <property type="nucleotide sequence ID" value="NC_006511.1"/>
</dbReference>
<dbReference type="SMR" id="Q5PN54"/>
<dbReference type="KEGG" id="spt:SPA0537"/>
<dbReference type="HOGENOM" id="CLU_055737_7_3_6"/>
<dbReference type="Proteomes" id="UP000008185">
    <property type="component" value="Chromosome"/>
</dbReference>
<dbReference type="GO" id="GO:0005886">
    <property type="term" value="C:plasma membrane"/>
    <property type="evidence" value="ECO:0007669"/>
    <property type="project" value="UniProtKB-SubCell"/>
</dbReference>
<dbReference type="GO" id="GO:0045271">
    <property type="term" value="C:respiratory chain complex I"/>
    <property type="evidence" value="ECO:0007669"/>
    <property type="project" value="TreeGrafter"/>
</dbReference>
<dbReference type="GO" id="GO:0051539">
    <property type="term" value="F:4 iron, 4 sulfur cluster binding"/>
    <property type="evidence" value="ECO:0007669"/>
    <property type="project" value="UniProtKB-KW"/>
</dbReference>
<dbReference type="GO" id="GO:0005506">
    <property type="term" value="F:iron ion binding"/>
    <property type="evidence" value="ECO:0007669"/>
    <property type="project" value="UniProtKB-UniRule"/>
</dbReference>
<dbReference type="GO" id="GO:0008137">
    <property type="term" value="F:NADH dehydrogenase (ubiquinone) activity"/>
    <property type="evidence" value="ECO:0007669"/>
    <property type="project" value="InterPro"/>
</dbReference>
<dbReference type="GO" id="GO:0050136">
    <property type="term" value="F:NADH:ubiquinone reductase (non-electrogenic) activity"/>
    <property type="evidence" value="ECO:0007669"/>
    <property type="project" value="UniProtKB-UniRule"/>
</dbReference>
<dbReference type="GO" id="GO:0048038">
    <property type="term" value="F:quinone binding"/>
    <property type="evidence" value="ECO:0007669"/>
    <property type="project" value="UniProtKB-KW"/>
</dbReference>
<dbReference type="GO" id="GO:0009060">
    <property type="term" value="P:aerobic respiration"/>
    <property type="evidence" value="ECO:0007669"/>
    <property type="project" value="TreeGrafter"/>
</dbReference>
<dbReference type="GO" id="GO:0015990">
    <property type="term" value="P:electron transport coupled proton transport"/>
    <property type="evidence" value="ECO:0007669"/>
    <property type="project" value="TreeGrafter"/>
</dbReference>
<dbReference type="FunFam" id="3.40.50.12280:FF:000002">
    <property type="entry name" value="NADH-quinone oxidoreductase subunit B"/>
    <property type="match status" value="1"/>
</dbReference>
<dbReference type="Gene3D" id="3.40.50.12280">
    <property type="match status" value="1"/>
</dbReference>
<dbReference type="HAMAP" id="MF_01356">
    <property type="entry name" value="NDH1_NuoB"/>
    <property type="match status" value="1"/>
</dbReference>
<dbReference type="InterPro" id="IPR006137">
    <property type="entry name" value="NADH_UbQ_OxRdtase-like_20kDa"/>
</dbReference>
<dbReference type="InterPro" id="IPR006138">
    <property type="entry name" value="NADH_UQ_OxRdtase_20Kd_su"/>
</dbReference>
<dbReference type="NCBIfam" id="TIGR01957">
    <property type="entry name" value="nuoB_fam"/>
    <property type="match status" value="1"/>
</dbReference>
<dbReference type="NCBIfam" id="NF005012">
    <property type="entry name" value="PRK06411.1"/>
    <property type="match status" value="1"/>
</dbReference>
<dbReference type="PANTHER" id="PTHR11995">
    <property type="entry name" value="NADH DEHYDROGENASE"/>
    <property type="match status" value="1"/>
</dbReference>
<dbReference type="PANTHER" id="PTHR11995:SF14">
    <property type="entry name" value="NADH DEHYDROGENASE [UBIQUINONE] IRON-SULFUR PROTEIN 7, MITOCHONDRIAL"/>
    <property type="match status" value="1"/>
</dbReference>
<dbReference type="Pfam" id="PF01058">
    <property type="entry name" value="Oxidored_q6"/>
    <property type="match status" value="1"/>
</dbReference>
<dbReference type="SUPFAM" id="SSF56770">
    <property type="entry name" value="HydA/Nqo6-like"/>
    <property type="match status" value="1"/>
</dbReference>
<dbReference type="PROSITE" id="PS01150">
    <property type="entry name" value="COMPLEX1_20K"/>
    <property type="match status" value="1"/>
</dbReference>
<keyword id="KW-0004">4Fe-4S</keyword>
<keyword id="KW-0997">Cell inner membrane</keyword>
<keyword id="KW-1003">Cell membrane</keyword>
<keyword id="KW-0408">Iron</keyword>
<keyword id="KW-0411">Iron-sulfur</keyword>
<keyword id="KW-0472">Membrane</keyword>
<keyword id="KW-0479">Metal-binding</keyword>
<keyword id="KW-0520">NAD</keyword>
<keyword id="KW-0874">Quinone</keyword>
<keyword id="KW-1278">Translocase</keyword>
<keyword id="KW-0813">Transport</keyword>
<keyword id="KW-0830">Ubiquinone</keyword>
<comment type="function">
    <text evidence="1">NDH-1 shuttles electrons from NADH, via FMN and iron-sulfur (Fe-S) centers, to quinones in the respiratory chain. The immediate electron acceptor for the enzyme in this species is believed to be ubiquinone. Couples the redox reaction to proton translocation (for every two electrons transferred, four hydrogen ions are translocated across the cytoplasmic membrane), and thus conserves the redox energy in a proton gradient.</text>
</comment>
<comment type="catalytic activity">
    <reaction evidence="1">
        <text>a quinone + NADH + 5 H(+)(in) = a quinol + NAD(+) + 4 H(+)(out)</text>
        <dbReference type="Rhea" id="RHEA:57888"/>
        <dbReference type="ChEBI" id="CHEBI:15378"/>
        <dbReference type="ChEBI" id="CHEBI:24646"/>
        <dbReference type="ChEBI" id="CHEBI:57540"/>
        <dbReference type="ChEBI" id="CHEBI:57945"/>
        <dbReference type="ChEBI" id="CHEBI:132124"/>
    </reaction>
</comment>
<comment type="cofactor">
    <cofactor evidence="1">
        <name>[4Fe-4S] cluster</name>
        <dbReference type="ChEBI" id="CHEBI:49883"/>
    </cofactor>
    <text evidence="1">Binds 1 [4Fe-4S] cluster.</text>
</comment>
<comment type="subunit">
    <text evidence="1">NDH-1 is composed of 13 different subunits. Subunits NuoB, CD, E, F, and G constitute the peripheral sector of the complex.</text>
</comment>
<comment type="subcellular location">
    <subcellularLocation>
        <location evidence="1">Cell inner membrane</location>
        <topology evidence="1">Peripheral membrane protein</topology>
        <orientation evidence="1">Cytoplasmic side</orientation>
    </subcellularLocation>
</comment>
<comment type="similarity">
    <text evidence="1">Belongs to the complex I 20 kDa subunit family.</text>
</comment>
<gene>
    <name evidence="1" type="primary">nuoB</name>
    <name type="ordered locus">SPA0537</name>
</gene>
<reference key="1">
    <citation type="journal article" date="2004" name="Nat. Genet.">
        <title>Comparison of genome degradation in Paratyphi A and Typhi, human-restricted serovars of Salmonella enterica that cause typhoid.</title>
        <authorList>
            <person name="McClelland M."/>
            <person name="Sanderson K.E."/>
            <person name="Clifton S.W."/>
            <person name="Latreille P."/>
            <person name="Porwollik S."/>
            <person name="Sabo A."/>
            <person name="Meyer R."/>
            <person name="Bieri T."/>
            <person name="Ozersky P."/>
            <person name="McLellan M."/>
            <person name="Harkins C.R."/>
            <person name="Wang C."/>
            <person name="Nguyen C."/>
            <person name="Berghoff A."/>
            <person name="Elliott G."/>
            <person name="Kohlberg S."/>
            <person name="Strong C."/>
            <person name="Du F."/>
            <person name="Carter J."/>
            <person name="Kremizki C."/>
            <person name="Layman D."/>
            <person name="Leonard S."/>
            <person name="Sun H."/>
            <person name="Fulton L."/>
            <person name="Nash W."/>
            <person name="Miner T."/>
            <person name="Minx P."/>
            <person name="Delehaunty K."/>
            <person name="Fronick C."/>
            <person name="Magrini V."/>
            <person name="Nhan M."/>
            <person name="Warren W."/>
            <person name="Florea L."/>
            <person name="Spieth J."/>
            <person name="Wilson R.K."/>
        </authorList>
    </citation>
    <scope>NUCLEOTIDE SEQUENCE [LARGE SCALE GENOMIC DNA]</scope>
    <source>
        <strain>ATCC 9150 / SARB42</strain>
    </source>
</reference>
<proteinExistence type="inferred from homology"/>
<organism>
    <name type="scientific">Salmonella paratyphi A (strain ATCC 9150 / SARB42)</name>
    <dbReference type="NCBI Taxonomy" id="295319"/>
    <lineage>
        <taxon>Bacteria</taxon>
        <taxon>Pseudomonadati</taxon>
        <taxon>Pseudomonadota</taxon>
        <taxon>Gammaproteobacteria</taxon>
        <taxon>Enterobacterales</taxon>
        <taxon>Enterobacteriaceae</taxon>
        <taxon>Salmonella</taxon>
    </lineage>
</organism>
<feature type="chain" id="PRO_0000376367" description="NADH-quinone oxidoreductase subunit B">
    <location>
        <begin position="1"/>
        <end position="220"/>
    </location>
</feature>
<feature type="binding site" evidence="1">
    <location>
        <position position="63"/>
    </location>
    <ligand>
        <name>[4Fe-4S] cluster</name>
        <dbReference type="ChEBI" id="CHEBI:49883"/>
    </ligand>
</feature>
<feature type="binding site" evidence="1">
    <location>
        <position position="64"/>
    </location>
    <ligand>
        <name>[4Fe-4S] cluster</name>
        <dbReference type="ChEBI" id="CHEBI:49883"/>
    </ligand>
</feature>
<feature type="binding site" evidence="1">
    <location>
        <position position="129"/>
    </location>
    <ligand>
        <name>[4Fe-4S] cluster</name>
        <dbReference type="ChEBI" id="CHEBI:49883"/>
    </ligand>
</feature>
<feature type="binding site" evidence="1">
    <location>
        <position position="158"/>
    </location>
    <ligand>
        <name>[4Fe-4S] cluster</name>
        <dbReference type="ChEBI" id="CHEBI:49883"/>
    </ligand>
</feature>
<evidence type="ECO:0000255" key="1">
    <source>
        <dbReference type="HAMAP-Rule" id="MF_01356"/>
    </source>
</evidence>